<name>M3A_CONBE</name>
<reference key="1">
    <citation type="journal article" date="1999" name="J. Nat. Toxins">
        <title>Studies on conotoxins of Conus betulinus.</title>
        <authorList>
            <person name="Chen J.-S."/>
            <person name="Fan C.-X."/>
            <person name="Hu K.-P."/>
            <person name="Wei K.-H."/>
            <person name="Zhong M.-N."/>
        </authorList>
    </citation>
    <scope>PROTEIN SEQUENCE</scope>
    <scope>MASS SPECTROMETRY</scope>
    <scope>SUBCELLULAR LOCATION</scope>
    <source>
        <tissue>Venom</tissue>
    </source>
</reference>
<reference key="2">
    <citation type="journal article" date="2013" name="Bioorg. Med. Chem.">
        <title>The three-dimensional solution structure of mini-M conotoxin BtIIIA reveals a disconnection between disulfide connectivity and peptide fold.</title>
        <authorList>
            <person name="Akcan M."/>
            <person name="Cao Y."/>
            <person name="Chongxu F."/>
            <person name="Craik D.J."/>
        </authorList>
    </citation>
    <scope>STRUCTURE BY NMR</scope>
    <scope>SYNTHESIS</scope>
    <scope>DISULFIDE BONDS</scope>
    <source>
        <tissue>Venom</tissue>
    </source>
</reference>
<accession>P58623</accession>
<protein>
    <recommendedName>
        <fullName evidence="4">Conotoxin BtIIIA</fullName>
    </recommendedName>
    <alternativeName>
        <fullName evidence="3">BeTXIa</fullName>
    </alternativeName>
</protein>
<evidence type="ECO:0000269" key="1">
    <source>
    </source>
</evidence>
<evidence type="ECO:0000269" key="2">
    <source>
    </source>
</evidence>
<evidence type="ECO:0000303" key="3">
    <source>
    </source>
</evidence>
<evidence type="ECO:0000303" key="4">
    <source>
    </source>
</evidence>
<evidence type="ECO:0000305" key="5"/>
<evidence type="ECO:0000305" key="6">
    <source>
    </source>
</evidence>
<organism>
    <name type="scientific">Conus betulinus</name>
    <name type="common">Beech cone</name>
    <dbReference type="NCBI Taxonomy" id="89764"/>
    <lineage>
        <taxon>Eukaryota</taxon>
        <taxon>Metazoa</taxon>
        <taxon>Spiralia</taxon>
        <taxon>Lophotrochozoa</taxon>
        <taxon>Mollusca</taxon>
        <taxon>Gastropoda</taxon>
        <taxon>Caenogastropoda</taxon>
        <taxon>Neogastropoda</taxon>
        <taxon>Conoidea</taxon>
        <taxon>Conidae</taxon>
        <taxon>Conus</taxon>
        <taxon>Dendroconus</taxon>
    </lineage>
</organism>
<sequence>CCKQSCTTCMPCCW</sequence>
<feature type="peptide" id="PRO_0000044499" description="Conotoxin BtIIIA" evidence="1">
    <location>
        <begin position="1"/>
        <end position="14"/>
    </location>
</feature>
<feature type="disulfide bond" evidence="2">
    <location>
        <begin position="1"/>
        <end position="13"/>
    </location>
</feature>
<feature type="disulfide bond" evidence="2">
    <location>
        <begin position="2"/>
        <end position="9"/>
    </location>
</feature>
<feature type="disulfide bond" evidence="2">
    <location>
        <begin position="6"/>
        <end position="12"/>
    </location>
</feature>
<keyword id="KW-0903">Direct protein sequencing</keyword>
<keyword id="KW-1015">Disulfide bond</keyword>
<keyword id="KW-0528">Neurotoxin</keyword>
<keyword id="KW-0964">Secreted</keyword>
<keyword id="KW-0800">Toxin</keyword>
<proteinExistence type="evidence at protein level"/>
<dbReference type="ConoServer" id="1516">
    <property type="toxin name" value="BtIIIA"/>
</dbReference>
<dbReference type="GO" id="GO:0005576">
    <property type="term" value="C:extracellular region"/>
    <property type="evidence" value="ECO:0007669"/>
    <property type="project" value="UniProtKB-SubCell"/>
</dbReference>
<dbReference type="GO" id="GO:0090729">
    <property type="term" value="F:toxin activity"/>
    <property type="evidence" value="ECO:0007669"/>
    <property type="project" value="UniProtKB-KW"/>
</dbReference>
<comment type="subcellular location">
    <subcellularLocation>
        <location evidence="1">Secreted</location>
    </subcellularLocation>
</comment>
<comment type="tissue specificity">
    <text evidence="6">Expressed by the venom duct.</text>
</comment>
<comment type="domain">
    <text>The cysteine framework is III (CC-C-C-CC). Classified in the M-2 branch, since 2 residues stand between the fourth and the fifth cysteine residues.</text>
</comment>
<comment type="mass spectrometry"/>
<comment type="similarity">
    <text evidence="5">Belongs to the conotoxin M superfamily.</text>
</comment>